<proteinExistence type="inferred from homology"/>
<reference key="1">
    <citation type="submission" date="2007-11" db="EMBL/GenBank/DDBJ databases">
        <authorList>
            <consortium name="The Salmonella enterica serovar Arizonae Genome Sequencing Project"/>
            <person name="McClelland M."/>
            <person name="Sanderson E.K."/>
            <person name="Porwollik S."/>
            <person name="Spieth J."/>
            <person name="Clifton W.S."/>
            <person name="Fulton R."/>
            <person name="Chunyan W."/>
            <person name="Wollam A."/>
            <person name="Shah N."/>
            <person name="Pepin K."/>
            <person name="Bhonagiri V."/>
            <person name="Nash W."/>
            <person name="Johnson M."/>
            <person name="Thiruvilangam P."/>
            <person name="Wilson R."/>
        </authorList>
    </citation>
    <scope>NUCLEOTIDE SEQUENCE [LARGE SCALE GENOMIC DNA]</scope>
    <source>
        <strain>ATCC BAA-731 / CDC346-86 / RSK2980</strain>
    </source>
</reference>
<name>HSLU_SALAR</name>
<gene>
    <name evidence="1" type="primary">hslU</name>
    <name type="ordered locus">SARI_03565</name>
</gene>
<comment type="function">
    <text evidence="1">ATPase subunit of a proteasome-like degradation complex; this subunit has chaperone activity. The binding of ATP and its subsequent hydrolysis by HslU are essential for unfolding of protein substrates subsequently hydrolyzed by HslV. HslU recognizes the N-terminal part of its protein substrates and unfolds these before they are guided to HslV for hydrolysis.</text>
</comment>
<comment type="subunit">
    <text evidence="1">A double ring-shaped homohexamer of HslV is capped on each side by a ring-shaped HslU homohexamer. The assembly of the HslU/HslV complex is dependent on binding of ATP.</text>
</comment>
<comment type="subcellular location">
    <subcellularLocation>
        <location evidence="1">Cytoplasm</location>
    </subcellularLocation>
</comment>
<comment type="induction">
    <text evidence="1">By heat shock.</text>
</comment>
<comment type="similarity">
    <text evidence="1">Belongs to the ClpX chaperone family. HslU subfamily.</text>
</comment>
<organism>
    <name type="scientific">Salmonella arizonae (strain ATCC BAA-731 / CDC346-86 / RSK2980)</name>
    <dbReference type="NCBI Taxonomy" id="41514"/>
    <lineage>
        <taxon>Bacteria</taxon>
        <taxon>Pseudomonadati</taxon>
        <taxon>Pseudomonadota</taxon>
        <taxon>Gammaproteobacteria</taxon>
        <taxon>Enterobacterales</taxon>
        <taxon>Enterobacteriaceae</taxon>
        <taxon>Salmonella</taxon>
    </lineage>
</organism>
<protein>
    <recommendedName>
        <fullName evidence="1">ATP-dependent protease ATPase subunit HslU</fullName>
    </recommendedName>
    <alternativeName>
        <fullName evidence="1">Heat shock protein HslU</fullName>
    </alternativeName>
    <alternativeName>
        <fullName evidence="1">Unfoldase HslU</fullName>
    </alternativeName>
</protein>
<evidence type="ECO:0000255" key="1">
    <source>
        <dbReference type="HAMAP-Rule" id="MF_00249"/>
    </source>
</evidence>
<sequence>MSEMTPREIVSELNKHIIGQDNAKRSVAIALRNRWRRMQLDEELRHEVTPKNILMIGPTGVGKTEIARRLAKLANAPFIKVEATKFTEVGYVGKEVDSIIRDLTDAAVKMVRVQAIEKNRYRAEELAEERILDVLVPPAKNNWGQTEQQQEPSAARQTFRKKLREGQLDDKEIEINLAAAPMGVEIMAPPGMEEMTSQLQSLFQNLGGQKQKPRKLKIKDAMKLLVEEEAAKLVNPEELKQDAIDAVEQHGIVFIDEIDKICKRGETSGPDVSREGVQRDLLPLVEGCTVSTKHGMVKTDHILFIASGAFQVAKPSDLIPELQGRLPIRVELQALTTSDFERILTEPNASVTVQYKALMATEGVNIEFTDSGIKRIAEAAWQVNETTENIGARRLHTVLERLMEEISYNASDLHGQNITIDAEYVSKHLDALVADEDLSRFIL</sequence>
<keyword id="KW-0067">ATP-binding</keyword>
<keyword id="KW-0143">Chaperone</keyword>
<keyword id="KW-0963">Cytoplasm</keyword>
<keyword id="KW-0547">Nucleotide-binding</keyword>
<keyword id="KW-1185">Reference proteome</keyword>
<keyword id="KW-0346">Stress response</keyword>
<dbReference type="EMBL" id="CP000880">
    <property type="protein sequence ID" value="ABX23380.1"/>
    <property type="molecule type" value="Genomic_DNA"/>
</dbReference>
<dbReference type="SMR" id="A9MI34"/>
<dbReference type="STRING" id="41514.SARI_03565"/>
<dbReference type="KEGG" id="ses:SARI_03565"/>
<dbReference type="HOGENOM" id="CLU_033123_0_0_6"/>
<dbReference type="Proteomes" id="UP000002084">
    <property type="component" value="Chromosome"/>
</dbReference>
<dbReference type="GO" id="GO:0009376">
    <property type="term" value="C:HslUV protease complex"/>
    <property type="evidence" value="ECO:0007669"/>
    <property type="project" value="UniProtKB-UniRule"/>
</dbReference>
<dbReference type="GO" id="GO:0005524">
    <property type="term" value="F:ATP binding"/>
    <property type="evidence" value="ECO:0007669"/>
    <property type="project" value="UniProtKB-UniRule"/>
</dbReference>
<dbReference type="GO" id="GO:0016887">
    <property type="term" value="F:ATP hydrolysis activity"/>
    <property type="evidence" value="ECO:0007669"/>
    <property type="project" value="InterPro"/>
</dbReference>
<dbReference type="GO" id="GO:0008233">
    <property type="term" value="F:peptidase activity"/>
    <property type="evidence" value="ECO:0007669"/>
    <property type="project" value="InterPro"/>
</dbReference>
<dbReference type="GO" id="GO:0036402">
    <property type="term" value="F:proteasome-activating activity"/>
    <property type="evidence" value="ECO:0007669"/>
    <property type="project" value="UniProtKB-UniRule"/>
</dbReference>
<dbReference type="GO" id="GO:0043335">
    <property type="term" value="P:protein unfolding"/>
    <property type="evidence" value="ECO:0007669"/>
    <property type="project" value="UniProtKB-UniRule"/>
</dbReference>
<dbReference type="GO" id="GO:0051603">
    <property type="term" value="P:proteolysis involved in protein catabolic process"/>
    <property type="evidence" value="ECO:0007669"/>
    <property type="project" value="TreeGrafter"/>
</dbReference>
<dbReference type="CDD" id="cd19498">
    <property type="entry name" value="RecA-like_HslU"/>
    <property type="match status" value="1"/>
</dbReference>
<dbReference type="FunFam" id="1.10.8.10:FF:000012">
    <property type="entry name" value="ATP-dependent protease ATPase subunit HslU"/>
    <property type="match status" value="1"/>
</dbReference>
<dbReference type="FunFam" id="1.10.8.10:FF:000028">
    <property type="entry name" value="ATP-dependent protease ATPase subunit HslU"/>
    <property type="match status" value="1"/>
</dbReference>
<dbReference type="FunFam" id="1.10.8.60:FF:000027">
    <property type="entry name" value="ATP-dependent protease ATPase subunit HslU"/>
    <property type="match status" value="1"/>
</dbReference>
<dbReference type="FunFam" id="3.40.50.300:FF:000213">
    <property type="entry name" value="ATP-dependent protease ATPase subunit HslU"/>
    <property type="match status" value="1"/>
</dbReference>
<dbReference type="FunFam" id="3.40.50.300:FF:000220">
    <property type="entry name" value="ATP-dependent protease ATPase subunit HslU"/>
    <property type="match status" value="1"/>
</dbReference>
<dbReference type="Gene3D" id="1.10.8.60">
    <property type="match status" value="1"/>
</dbReference>
<dbReference type="Gene3D" id="1.10.8.10">
    <property type="entry name" value="DNA helicase RuvA subunit, C-terminal domain"/>
    <property type="match status" value="2"/>
</dbReference>
<dbReference type="Gene3D" id="3.40.50.300">
    <property type="entry name" value="P-loop containing nucleotide triphosphate hydrolases"/>
    <property type="match status" value="1"/>
</dbReference>
<dbReference type="HAMAP" id="MF_00249">
    <property type="entry name" value="HslU"/>
    <property type="match status" value="1"/>
</dbReference>
<dbReference type="InterPro" id="IPR003593">
    <property type="entry name" value="AAA+_ATPase"/>
</dbReference>
<dbReference type="InterPro" id="IPR050052">
    <property type="entry name" value="ATP-dep_Clp_protease_ClpX"/>
</dbReference>
<dbReference type="InterPro" id="IPR003959">
    <property type="entry name" value="ATPase_AAA_core"/>
</dbReference>
<dbReference type="InterPro" id="IPR019489">
    <property type="entry name" value="Clp_ATPase_C"/>
</dbReference>
<dbReference type="InterPro" id="IPR004491">
    <property type="entry name" value="HslU"/>
</dbReference>
<dbReference type="InterPro" id="IPR027417">
    <property type="entry name" value="P-loop_NTPase"/>
</dbReference>
<dbReference type="NCBIfam" id="TIGR00390">
    <property type="entry name" value="hslU"/>
    <property type="match status" value="1"/>
</dbReference>
<dbReference type="NCBIfam" id="NF003544">
    <property type="entry name" value="PRK05201.1"/>
    <property type="match status" value="1"/>
</dbReference>
<dbReference type="PANTHER" id="PTHR48102">
    <property type="entry name" value="ATP-DEPENDENT CLP PROTEASE ATP-BINDING SUBUNIT CLPX-LIKE, MITOCHONDRIAL-RELATED"/>
    <property type="match status" value="1"/>
</dbReference>
<dbReference type="PANTHER" id="PTHR48102:SF3">
    <property type="entry name" value="ATP-DEPENDENT PROTEASE ATPASE SUBUNIT HSLU"/>
    <property type="match status" value="1"/>
</dbReference>
<dbReference type="Pfam" id="PF00004">
    <property type="entry name" value="AAA"/>
    <property type="match status" value="1"/>
</dbReference>
<dbReference type="Pfam" id="PF07724">
    <property type="entry name" value="AAA_2"/>
    <property type="match status" value="1"/>
</dbReference>
<dbReference type="SMART" id="SM00382">
    <property type="entry name" value="AAA"/>
    <property type="match status" value="1"/>
</dbReference>
<dbReference type="SMART" id="SM01086">
    <property type="entry name" value="ClpB_D2-small"/>
    <property type="match status" value="1"/>
</dbReference>
<dbReference type="SUPFAM" id="SSF52540">
    <property type="entry name" value="P-loop containing nucleoside triphosphate hydrolases"/>
    <property type="match status" value="1"/>
</dbReference>
<accession>A9MI34</accession>
<feature type="chain" id="PRO_1000078452" description="ATP-dependent protease ATPase subunit HslU">
    <location>
        <begin position="1"/>
        <end position="443"/>
    </location>
</feature>
<feature type="binding site" evidence="1">
    <location>
        <position position="18"/>
    </location>
    <ligand>
        <name>ATP</name>
        <dbReference type="ChEBI" id="CHEBI:30616"/>
    </ligand>
</feature>
<feature type="binding site" evidence="1">
    <location>
        <begin position="60"/>
        <end position="65"/>
    </location>
    <ligand>
        <name>ATP</name>
        <dbReference type="ChEBI" id="CHEBI:30616"/>
    </ligand>
</feature>
<feature type="binding site" evidence="1">
    <location>
        <position position="256"/>
    </location>
    <ligand>
        <name>ATP</name>
        <dbReference type="ChEBI" id="CHEBI:30616"/>
    </ligand>
</feature>
<feature type="binding site" evidence="1">
    <location>
        <position position="321"/>
    </location>
    <ligand>
        <name>ATP</name>
        <dbReference type="ChEBI" id="CHEBI:30616"/>
    </ligand>
</feature>
<feature type="binding site" evidence="1">
    <location>
        <position position="393"/>
    </location>
    <ligand>
        <name>ATP</name>
        <dbReference type="ChEBI" id="CHEBI:30616"/>
    </ligand>
</feature>